<keyword id="KW-0968">Cytoplasmic vesicle</keyword>
<keyword id="KW-1015">Disulfide bond</keyword>
<keyword id="KW-0278">Fertilization</keyword>
<keyword id="KW-0325">Glycoprotein</keyword>
<keyword id="KW-0472">Membrane</keyword>
<keyword id="KW-1185">Reference proteome</keyword>
<keyword id="KW-0677">Repeat</keyword>
<keyword id="KW-0732">Signal</keyword>
<keyword id="KW-0768">Sushi</keyword>
<keyword id="KW-0812">Transmembrane</keyword>
<keyword id="KW-1133">Transmembrane helix</keyword>
<feature type="signal peptide" evidence="2">
    <location>
        <begin position="1"/>
        <end position="42"/>
    </location>
</feature>
<feature type="chain" id="PRO_0000238974" description="Membrane cofactor protein">
    <location>
        <begin position="43"/>
        <end position="355"/>
    </location>
</feature>
<feature type="topological domain" description="Extracellular" evidence="2">
    <location>
        <begin position="43"/>
        <end position="326"/>
    </location>
</feature>
<feature type="transmembrane region" description="Helical" evidence="2">
    <location>
        <begin position="327"/>
        <end position="347"/>
    </location>
</feature>
<feature type="topological domain" description="Cytoplasmic" evidence="2">
    <location>
        <begin position="348"/>
        <end position="355"/>
    </location>
</feature>
<feature type="domain" description="Sushi 1" evidence="3">
    <location>
        <begin position="43"/>
        <end position="104"/>
    </location>
</feature>
<feature type="domain" description="Sushi 2" evidence="3">
    <location>
        <begin position="105"/>
        <end position="168"/>
    </location>
</feature>
<feature type="domain" description="Sushi 3" evidence="3">
    <location>
        <begin position="169"/>
        <end position="234"/>
    </location>
</feature>
<feature type="domain" description="Sushi 4" evidence="3">
    <location>
        <begin position="235"/>
        <end position="294"/>
    </location>
</feature>
<feature type="glycosylation site" description="N-linked (GlcNAc...) asparagine" evidence="2">
    <location>
        <position position="179"/>
    </location>
</feature>
<feature type="glycosylation site" description="O-linked (GalNAc...) threonine" evidence="2">
    <location>
        <position position="301"/>
    </location>
</feature>
<feature type="disulfide bond" evidence="3">
    <location>
        <begin position="107"/>
        <end position="149"/>
    </location>
</feature>
<feature type="disulfide bond" evidence="3">
    <location>
        <begin position="135"/>
        <end position="166"/>
    </location>
</feature>
<feature type="disulfide bond" evidence="3">
    <location>
        <begin position="171"/>
        <end position="219"/>
    </location>
</feature>
<feature type="disulfide bond" evidence="3">
    <location>
        <begin position="200"/>
        <end position="232"/>
    </location>
</feature>
<feature type="disulfide bond" evidence="3">
    <location>
        <begin position="237"/>
        <end position="279"/>
    </location>
</feature>
<feature type="disulfide bond" evidence="3">
    <location>
        <begin position="265"/>
        <end position="292"/>
    </location>
</feature>
<organism>
    <name type="scientific">Rattus norvegicus</name>
    <name type="common">Rat</name>
    <dbReference type="NCBI Taxonomy" id="10116"/>
    <lineage>
        <taxon>Eukaryota</taxon>
        <taxon>Metazoa</taxon>
        <taxon>Chordata</taxon>
        <taxon>Craniata</taxon>
        <taxon>Vertebrata</taxon>
        <taxon>Euteleostomi</taxon>
        <taxon>Mammalia</taxon>
        <taxon>Eutheria</taxon>
        <taxon>Euarchontoglires</taxon>
        <taxon>Glires</taxon>
        <taxon>Rodentia</taxon>
        <taxon>Myomorpha</taxon>
        <taxon>Muroidea</taxon>
        <taxon>Muridae</taxon>
        <taxon>Murinae</taxon>
        <taxon>Rattus</taxon>
    </lineage>
</organism>
<dbReference type="EMBL" id="AB010920">
    <property type="protein sequence ID" value="BAA34811.1"/>
    <property type="molecule type" value="mRNA"/>
</dbReference>
<dbReference type="RefSeq" id="NP_062063.1">
    <property type="nucleotide sequence ID" value="NM_019190.1"/>
</dbReference>
<dbReference type="SMR" id="Q9Z0M4"/>
<dbReference type="FunCoup" id="Q9Z0M4">
    <property type="interactions" value="329"/>
</dbReference>
<dbReference type="STRING" id="10116.ENSRNOP00000053980"/>
<dbReference type="GlyCosmos" id="Q9Z0M4">
    <property type="glycosylation" value="2 sites, No reported glycans"/>
</dbReference>
<dbReference type="GlyGen" id="Q9Z0M4">
    <property type="glycosylation" value="2 sites"/>
</dbReference>
<dbReference type="PhosphoSitePlus" id="Q9Z0M4"/>
<dbReference type="PaxDb" id="10116-ENSRNOP00000053980"/>
<dbReference type="GeneID" id="29333"/>
<dbReference type="KEGG" id="rno:29333"/>
<dbReference type="AGR" id="RGD:3061"/>
<dbReference type="CTD" id="4179"/>
<dbReference type="RGD" id="3061">
    <property type="gene designation" value="Cd46"/>
</dbReference>
<dbReference type="VEuPathDB" id="HostDB:ENSRNOG00000008193"/>
<dbReference type="eggNOG" id="ENOG502QPUC">
    <property type="taxonomic scope" value="Eukaryota"/>
</dbReference>
<dbReference type="HOGENOM" id="CLU_020107_1_2_1"/>
<dbReference type="InParanoid" id="Q9Z0M4"/>
<dbReference type="OMA" id="CVKGPRP"/>
<dbReference type="OrthoDB" id="6480633at2759"/>
<dbReference type="PhylomeDB" id="Q9Z0M4"/>
<dbReference type="Reactome" id="R-RNO-977606">
    <property type="pathway name" value="Regulation of Complement cascade"/>
</dbReference>
<dbReference type="PRO" id="PR:Q9Z0M4"/>
<dbReference type="Proteomes" id="UP000002494">
    <property type="component" value="Chromosome 13"/>
</dbReference>
<dbReference type="Bgee" id="ENSRNOG00000007917">
    <property type="expression patterns" value="Expressed in testis and 19 other cell types or tissues"/>
</dbReference>
<dbReference type="GO" id="GO:0001669">
    <property type="term" value="C:acrosomal vesicle"/>
    <property type="evidence" value="ECO:0000314"/>
    <property type="project" value="RGD"/>
</dbReference>
<dbReference type="GO" id="GO:0016323">
    <property type="term" value="C:basolateral plasma membrane"/>
    <property type="evidence" value="ECO:0000314"/>
    <property type="project" value="RGD"/>
</dbReference>
<dbReference type="GO" id="GO:0009986">
    <property type="term" value="C:cell surface"/>
    <property type="evidence" value="ECO:0000314"/>
    <property type="project" value="RGD"/>
</dbReference>
<dbReference type="GO" id="GO:0005615">
    <property type="term" value="C:extracellular space"/>
    <property type="evidence" value="ECO:0000318"/>
    <property type="project" value="GO_Central"/>
</dbReference>
<dbReference type="GO" id="GO:0002079">
    <property type="term" value="C:inner acrosomal membrane"/>
    <property type="evidence" value="ECO:0000314"/>
    <property type="project" value="RGD"/>
</dbReference>
<dbReference type="GO" id="GO:0016020">
    <property type="term" value="C:membrane"/>
    <property type="evidence" value="ECO:0000266"/>
    <property type="project" value="RGD"/>
</dbReference>
<dbReference type="GO" id="GO:0005886">
    <property type="term" value="C:plasma membrane"/>
    <property type="evidence" value="ECO:0000266"/>
    <property type="project" value="RGD"/>
</dbReference>
<dbReference type="GO" id="GO:0045296">
    <property type="term" value="F:cadherin binding"/>
    <property type="evidence" value="ECO:0000266"/>
    <property type="project" value="RGD"/>
</dbReference>
<dbReference type="GO" id="GO:0004175">
    <property type="term" value="F:endopeptidase activity"/>
    <property type="evidence" value="ECO:0000266"/>
    <property type="project" value="RGD"/>
</dbReference>
<dbReference type="GO" id="GO:0045957">
    <property type="term" value="P:negative regulation of complement activation, alternative pathway"/>
    <property type="evidence" value="ECO:0000266"/>
    <property type="project" value="RGD"/>
</dbReference>
<dbReference type="GO" id="GO:0045959">
    <property type="term" value="P:negative regulation of complement activation, classical pathway"/>
    <property type="evidence" value="ECO:0000266"/>
    <property type="project" value="RGD"/>
</dbReference>
<dbReference type="GO" id="GO:0010629">
    <property type="term" value="P:negative regulation of gene expression"/>
    <property type="evidence" value="ECO:0000266"/>
    <property type="project" value="RGD"/>
</dbReference>
<dbReference type="GO" id="GO:0010628">
    <property type="term" value="P:positive regulation of gene expression"/>
    <property type="evidence" value="ECO:0000266"/>
    <property type="project" value="RGD"/>
</dbReference>
<dbReference type="GO" id="GO:0032733">
    <property type="term" value="P:positive regulation of interleukin-10 production"/>
    <property type="evidence" value="ECO:0000266"/>
    <property type="project" value="RGD"/>
</dbReference>
<dbReference type="GO" id="GO:0043382">
    <property type="term" value="P:positive regulation of memory T cell differentiation"/>
    <property type="evidence" value="ECO:0000266"/>
    <property type="project" value="RGD"/>
</dbReference>
<dbReference type="GO" id="GO:0045862">
    <property type="term" value="P:positive regulation of proteolysis"/>
    <property type="evidence" value="ECO:0000314"/>
    <property type="project" value="RGD"/>
</dbReference>
<dbReference type="GO" id="GO:0045591">
    <property type="term" value="P:positive regulation of regulatory T cell differentiation"/>
    <property type="evidence" value="ECO:0000266"/>
    <property type="project" value="RGD"/>
</dbReference>
<dbReference type="GO" id="GO:0042102">
    <property type="term" value="P:positive regulation of T cell proliferation"/>
    <property type="evidence" value="ECO:0000266"/>
    <property type="project" value="RGD"/>
</dbReference>
<dbReference type="GO" id="GO:0071636">
    <property type="term" value="P:positive regulation of transforming growth factor beta production"/>
    <property type="evidence" value="ECO:0000266"/>
    <property type="project" value="RGD"/>
</dbReference>
<dbReference type="GO" id="GO:0006508">
    <property type="term" value="P:proteolysis"/>
    <property type="evidence" value="ECO:0000266"/>
    <property type="project" value="RGD"/>
</dbReference>
<dbReference type="GO" id="GO:0008593">
    <property type="term" value="P:regulation of Notch signaling pathway"/>
    <property type="evidence" value="ECO:0000266"/>
    <property type="project" value="RGD"/>
</dbReference>
<dbReference type="GO" id="GO:0035581">
    <property type="term" value="P:sequestering of extracellular ligand from receptor"/>
    <property type="evidence" value="ECO:0000266"/>
    <property type="project" value="RGD"/>
</dbReference>
<dbReference type="GO" id="GO:0007338">
    <property type="term" value="P:single fertilization"/>
    <property type="evidence" value="ECO:0007669"/>
    <property type="project" value="UniProtKB-KW"/>
</dbReference>
<dbReference type="GO" id="GO:0002456">
    <property type="term" value="P:T cell mediated immunity"/>
    <property type="evidence" value="ECO:0000266"/>
    <property type="project" value="RGD"/>
</dbReference>
<dbReference type="CDD" id="cd00033">
    <property type="entry name" value="CCP"/>
    <property type="match status" value="4"/>
</dbReference>
<dbReference type="FunFam" id="2.10.70.10:FF:000055">
    <property type="entry name" value="Complement decay-accelerating factor, GPI-anchored"/>
    <property type="match status" value="1"/>
</dbReference>
<dbReference type="FunFam" id="2.10.70.10:FF:000014">
    <property type="entry name" value="Membrane cofactor protein"/>
    <property type="match status" value="1"/>
</dbReference>
<dbReference type="FunFam" id="2.10.70.10:FF:000042">
    <property type="entry name" value="Membrane cofactor protein"/>
    <property type="match status" value="1"/>
</dbReference>
<dbReference type="Gene3D" id="2.10.70.10">
    <property type="entry name" value="Complement Module, domain 1"/>
    <property type="match status" value="4"/>
</dbReference>
<dbReference type="InterPro" id="IPR017341">
    <property type="entry name" value="CD46"/>
</dbReference>
<dbReference type="InterPro" id="IPR050350">
    <property type="entry name" value="Compl-Cell_Adhes-Reg"/>
</dbReference>
<dbReference type="InterPro" id="IPR035976">
    <property type="entry name" value="Sushi/SCR/CCP_sf"/>
</dbReference>
<dbReference type="InterPro" id="IPR000436">
    <property type="entry name" value="Sushi_SCR_CCP_dom"/>
</dbReference>
<dbReference type="PANTHER" id="PTHR19325">
    <property type="entry name" value="COMPLEMENT COMPONENT-RELATED SUSHI DOMAIN-CONTAINING"/>
    <property type="match status" value="1"/>
</dbReference>
<dbReference type="PANTHER" id="PTHR19325:SF521">
    <property type="entry name" value="MEMBRANE COFACTOR PROTEIN"/>
    <property type="match status" value="1"/>
</dbReference>
<dbReference type="Pfam" id="PF00084">
    <property type="entry name" value="Sushi"/>
    <property type="match status" value="4"/>
</dbReference>
<dbReference type="PIRSF" id="PIRSF037971">
    <property type="entry name" value="TLX_CD46"/>
    <property type="match status" value="1"/>
</dbReference>
<dbReference type="SMART" id="SM00032">
    <property type="entry name" value="CCP"/>
    <property type="match status" value="4"/>
</dbReference>
<dbReference type="SUPFAM" id="SSF57535">
    <property type="entry name" value="Complement control module/SCR domain"/>
    <property type="match status" value="4"/>
</dbReference>
<dbReference type="PROSITE" id="PS50923">
    <property type="entry name" value="SUSHI"/>
    <property type="match status" value="4"/>
</dbReference>
<gene>
    <name type="primary">Cd46</name>
    <name type="synonym">Mcp</name>
</gene>
<reference key="1">
    <citation type="journal article" date="1998" name="Immunogenetics">
        <title>Molecular cloning of rat and mouse membrane cofactor protein (MCP, CD46): preferential expression in testis and close linkage between the mouse Mcp and Cr2 genes on distal chromosome 1.</title>
        <authorList>
            <person name="Miwa T."/>
            <person name="Nonaka M."/>
            <person name="Okada N."/>
            <person name="Wakana S."/>
            <person name="Shiroishi T."/>
            <person name="Okada H."/>
        </authorList>
    </citation>
    <scope>NUCLEOTIDE SEQUENCE [MRNA]</scope>
    <scope>TISSUE SPECIFICITY</scope>
    <source>
        <strain>Sprague-Dawley</strain>
        <tissue>Testis</tissue>
    </source>
</reference>
<reference key="2">
    <citation type="journal article" date="1999" name="Immunology">
        <title>Molecular cloning, expression and characterization of the rat analogue of human membrane cofactor protein (MCP/CD46).</title>
        <authorList>
            <person name="Mead R."/>
            <person name="Hinchliffe S.J."/>
            <person name="Morgan B.P."/>
        </authorList>
    </citation>
    <scope>NUCLEOTIDE SEQUENCE [MRNA]</scope>
    <scope>TISSUE SPECIFICITY</scope>
    <scope>FUNCTION</scope>
    <source>
        <tissue>Testis</tissue>
    </source>
</reference>
<reference key="3">
    <citation type="journal article" date="2004" name="Biol. Reprod.">
        <title>Rat membrane cofactor protein (MCP; CD46) is expressed only in the acrosome of developing and mature spermatozoa and mediates binding to immobilized activated C3.</title>
        <authorList>
            <person name="Mizuno M."/>
            <person name="Harris C.L."/>
            <person name="Johnson P.M."/>
            <person name="Morgan B.P."/>
        </authorList>
    </citation>
    <scope>GLYCOSYLATION</scope>
    <scope>TISSUE SPECIFICITY</scope>
    <scope>DEVELOPMENTAL STAGE</scope>
    <scope>SUBCELLULAR LOCATION</scope>
    <scope>FUNCTION</scope>
</reference>
<protein>
    <recommendedName>
        <fullName>Membrane cofactor protein</fullName>
    </recommendedName>
    <cdAntigenName>CD46</cdAntigenName>
</protein>
<proteinExistence type="evidence at protein level"/>
<sequence>MTAAPLTPDPTHPRRRRKSYTFFSLGIYAEALLFLLSSLSDACEPPPPFEAMELKDKPKPHYAIGEIIEYTCKKGYLYLSPYPMTAICQPNHTWVPISDHGCIKVQCTMLQDPSFGKVHYIDGRFSWGARVKYTCMNGYYMVGMSVLQCELNGNGDAFWNGHPPSCKKVYCLPPPKIKNGTHTFTDIKVFKYHEAVIYSCDPNPGPDKFSLVGPSMLFCAGHNTWSSDPPECKVVKCPFPVLQNGRQISRTEKKFSYQALVLFQCLEGFYMEGSSMVVCGAKSSWEPSIPQCLKGPKPHSTKPPVYSESGYPSPREGIFGQEFDAWIIALIVVTSVVGVIVICLIILRCSEYRKK</sequence>
<comment type="function">
    <text evidence="4 5">May be involved in the fusion of the spermatozoa with the oocyte during fertilization.</text>
</comment>
<comment type="subunit">
    <text evidence="1">Interacts with C3b. Interacts with C4b. Interacts with moesin/MSN.</text>
</comment>
<comment type="subcellular location">
    <subcellularLocation>
        <location evidence="5">Cytoplasmic vesicle</location>
        <location evidence="5">Secretory vesicle</location>
        <location evidence="5">Acrosome inner membrane</location>
        <topology evidence="5">Single-pass membrane protein</topology>
    </subcellularLocation>
    <text>Inner acrosomal membrane of spermatozoa.</text>
</comment>
<comment type="tissue specificity">
    <text evidence="4 5 6">Specifically expressed in testis. Within testis, present only in elongated spermatids and spermatozoa (at protein level).</text>
</comment>
<comment type="developmental stage">
    <text evidence="5">Not expressed in embryonic and immature rats. Expressed in parallel with synthesis of spermatids.</text>
</comment>
<comment type="PTM">
    <text evidence="5">O-glycosylated.</text>
</comment>
<comment type="PTM">
    <text evidence="5">N-glycosylated.</text>
</comment>
<accession>Q9Z0M4</accession>
<name>MCP_RAT</name>
<evidence type="ECO:0000250" key="1">
    <source>
        <dbReference type="UniProtKB" id="P15529"/>
    </source>
</evidence>
<evidence type="ECO:0000255" key="2"/>
<evidence type="ECO:0000255" key="3">
    <source>
        <dbReference type="PROSITE-ProRule" id="PRU00302"/>
    </source>
</evidence>
<evidence type="ECO:0000269" key="4">
    <source>
    </source>
</evidence>
<evidence type="ECO:0000269" key="5">
    <source>
    </source>
</evidence>
<evidence type="ECO:0000269" key="6">
    <source>
    </source>
</evidence>